<dbReference type="EMBL" id="AE000667">
    <property type="protein sequence ID" value="AAC07967.1"/>
    <property type="molecule type" value="Genomic_DNA"/>
</dbReference>
<dbReference type="RefSeq" id="NP_046415.1">
    <property type="nucleotide sequence ID" value="NC_001880.1"/>
</dbReference>
<dbReference type="EnsemblBacteria" id="AAC07967">
    <property type="protein sequence ID" value="AAC07967"/>
    <property type="gene ID" value="aq_aa24"/>
</dbReference>
<dbReference type="KEGG" id="aae:aq_aa24"/>
<dbReference type="eggNOG" id="COG3316">
    <property type="taxonomic scope" value="Bacteria"/>
</dbReference>
<dbReference type="HOGENOM" id="CLU_2033257_0_0_0"/>
<dbReference type="InParanoid" id="O66415"/>
<dbReference type="OrthoDB" id="1617615at2"/>
<dbReference type="Proteomes" id="UP000000798">
    <property type="component" value="Plasmid ece1"/>
</dbReference>
<dbReference type="PANTHER" id="PTHR39967">
    <property type="match status" value="1"/>
</dbReference>
<dbReference type="PANTHER" id="PTHR39967:SF1">
    <property type="entry name" value="ISH14-TYPE TRANSPOSASE HSIRS44"/>
    <property type="match status" value="1"/>
</dbReference>
<evidence type="ECO:0000305" key="1"/>
<proteinExistence type="predicted"/>
<gene>
    <name type="ordered locus">aq_aa24</name>
</gene>
<reference key="1">
    <citation type="journal article" date="1998" name="Nature">
        <title>The complete genome of the hyperthermophilic bacterium Aquifex aeolicus.</title>
        <authorList>
            <person name="Deckert G."/>
            <person name="Warren P.V."/>
            <person name="Gaasterland T."/>
            <person name="Young W.G."/>
            <person name="Lenox A.L."/>
            <person name="Graham D.E."/>
            <person name="Overbeek R."/>
            <person name="Snead M.A."/>
            <person name="Keller M."/>
            <person name="Aujay M."/>
            <person name="Huber R."/>
            <person name="Feldman R.A."/>
            <person name="Short J.M."/>
            <person name="Olsen G.J."/>
            <person name="Swanson R.V."/>
        </authorList>
    </citation>
    <scope>NUCLEOTIDE SEQUENCE [LARGE SCALE GENOMIC DNA]</scope>
    <source>
        <strain>VF5</strain>
    </source>
</reference>
<accession>O66415</accession>
<protein>
    <recommendedName>
        <fullName>Uncharacterized protein aq_aa24</fullName>
    </recommendedName>
</protein>
<feature type="chain" id="PRO_0000186995" description="Uncharacterized protein aq_aa24">
    <location>
        <begin position="1"/>
        <end position="121"/>
    </location>
</feature>
<sequence>MWIACNLKGVPTFVWLSAKKSSHVAKLVLYNSKGYVFVTDKGPWYRKACRELNCGWIHETFGGRNVVERWFKHIKQRMKGFHKRFPHNAKYETVGLDLPLLFSLDHSTPLTLNLAISKFWK</sequence>
<geneLocation type="plasmid">
    <name>ece1</name>
</geneLocation>
<comment type="similarity">
    <text evidence="1">To M.jannaschii MJ0017 and MJ1466.</text>
</comment>
<organism>
    <name type="scientific">Aquifex aeolicus (strain VF5)</name>
    <dbReference type="NCBI Taxonomy" id="224324"/>
    <lineage>
        <taxon>Bacteria</taxon>
        <taxon>Pseudomonadati</taxon>
        <taxon>Aquificota</taxon>
        <taxon>Aquificia</taxon>
        <taxon>Aquificales</taxon>
        <taxon>Aquificaceae</taxon>
        <taxon>Aquifex</taxon>
    </lineage>
</organism>
<keyword id="KW-0614">Plasmid</keyword>
<keyword id="KW-1185">Reference proteome</keyword>
<name>YZ24_AQUAE</name>